<keyword id="KW-0963">Cytoplasm</keyword>
<keyword id="KW-0342">GTP-binding</keyword>
<keyword id="KW-0547">Nucleotide-binding</keyword>
<keyword id="KW-0648">Protein biosynthesis</keyword>
<keyword id="KW-1185">Reference proteome</keyword>
<name>RF3_BUCAI</name>
<organism>
    <name type="scientific">Buchnera aphidicola subsp. Acyrthosiphon pisum (strain APS)</name>
    <name type="common">Acyrthosiphon pisum symbiotic bacterium</name>
    <dbReference type="NCBI Taxonomy" id="107806"/>
    <lineage>
        <taxon>Bacteria</taxon>
        <taxon>Pseudomonadati</taxon>
        <taxon>Pseudomonadota</taxon>
        <taxon>Gammaproteobacteria</taxon>
        <taxon>Enterobacterales</taxon>
        <taxon>Erwiniaceae</taxon>
        <taxon>Buchnera</taxon>
    </lineage>
</organism>
<protein>
    <recommendedName>
        <fullName>Peptide chain release factor 3</fullName>
        <shortName>RF-3</shortName>
    </recommendedName>
</protein>
<evidence type="ECO:0000250" key="1"/>
<evidence type="ECO:0000305" key="2"/>
<dbReference type="EMBL" id="BA000003">
    <property type="protein sequence ID" value="BAB13235.1"/>
    <property type="molecule type" value="Genomic_DNA"/>
</dbReference>
<dbReference type="RefSeq" id="NP_240349.1">
    <property type="nucleotide sequence ID" value="NC_002528.1"/>
</dbReference>
<dbReference type="RefSeq" id="WP_010896156.1">
    <property type="nucleotide sequence ID" value="NC_002528.1"/>
</dbReference>
<dbReference type="SMR" id="P57608"/>
<dbReference type="STRING" id="563178.BUAP5A_536"/>
<dbReference type="EnsemblBacteria" id="BAB13235">
    <property type="protein sequence ID" value="BAB13235"/>
    <property type="gene ID" value="BAB13235"/>
</dbReference>
<dbReference type="KEGG" id="buc:BU543"/>
<dbReference type="PATRIC" id="fig|107806.10.peg.547"/>
<dbReference type="eggNOG" id="COG4108">
    <property type="taxonomic scope" value="Bacteria"/>
</dbReference>
<dbReference type="HOGENOM" id="CLU_002794_2_1_6"/>
<dbReference type="Proteomes" id="UP000001806">
    <property type="component" value="Chromosome"/>
</dbReference>
<dbReference type="GO" id="GO:0005829">
    <property type="term" value="C:cytosol"/>
    <property type="evidence" value="ECO:0007669"/>
    <property type="project" value="TreeGrafter"/>
</dbReference>
<dbReference type="GO" id="GO:0005525">
    <property type="term" value="F:GTP binding"/>
    <property type="evidence" value="ECO:0007669"/>
    <property type="project" value="UniProtKB-UniRule"/>
</dbReference>
<dbReference type="GO" id="GO:0003924">
    <property type="term" value="F:GTPase activity"/>
    <property type="evidence" value="ECO:0007669"/>
    <property type="project" value="InterPro"/>
</dbReference>
<dbReference type="GO" id="GO:0097216">
    <property type="term" value="F:guanosine tetraphosphate binding"/>
    <property type="evidence" value="ECO:0007669"/>
    <property type="project" value="UniProtKB-ARBA"/>
</dbReference>
<dbReference type="GO" id="GO:0016150">
    <property type="term" value="F:translation release factor activity, codon nonspecific"/>
    <property type="evidence" value="ECO:0007669"/>
    <property type="project" value="TreeGrafter"/>
</dbReference>
<dbReference type="GO" id="GO:0016149">
    <property type="term" value="F:translation release factor activity, codon specific"/>
    <property type="evidence" value="ECO:0007669"/>
    <property type="project" value="UniProtKB-UniRule"/>
</dbReference>
<dbReference type="GO" id="GO:0006449">
    <property type="term" value="P:regulation of translational termination"/>
    <property type="evidence" value="ECO:0007669"/>
    <property type="project" value="UniProtKB-UniRule"/>
</dbReference>
<dbReference type="CDD" id="cd04169">
    <property type="entry name" value="RF3"/>
    <property type="match status" value="1"/>
</dbReference>
<dbReference type="CDD" id="cd16259">
    <property type="entry name" value="RF3_III"/>
    <property type="match status" value="1"/>
</dbReference>
<dbReference type="FunFam" id="3.30.70.3280:FF:000001">
    <property type="entry name" value="Peptide chain release factor 3"/>
    <property type="match status" value="1"/>
</dbReference>
<dbReference type="FunFam" id="3.40.50.300:FF:000542">
    <property type="entry name" value="Peptide chain release factor 3"/>
    <property type="match status" value="1"/>
</dbReference>
<dbReference type="Gene3D" id="3.40.50.300">
    <property type="entry name" value="P-loop containing nucleotide triphosphate hydrolases"/>
    <property type="match status" value="1"/>
</dbReference>
<dbReference type="Gene3D" id="3.30.70.3280">
    <property type="entry name" value="Peptide chain release factor 3, domain III"/>
    <property type="match status" value="1"/>
</dbReference>
<dbReference type="Gene3D" id="2.40.30.10">
    <property type="entry name" value="Translation factors"/>
    <property type="match status" value="1"/>
</dbReference>
<dbReference type="HAMAP" id="MF_00072">
    <property type="entry name" value="Rel_fac_3"/>
    <property type="match status" value="1"/>
</dbReference>
<dbReference type="InterPro" id="IPR053905">
    <property type="entry name" value="EF-G-like_DII"/>
</dbReference>
<dbReference type="InterPro" id="IPR035647">
    <property type="entry name" value="EFG_III/V"/>
</dbReference>
<dbReference type="InterPro" id="IPR031157">
    <property type="entry name" value="G_TR_CS"/>
</dbReference>
<dbReference type="InterPro" id="IPR027417">
    <property type="entry name" value="P-loop_NTPase"/>
</dbReference>
<dbReference type="InterPro" id="IPR004548">
    <property type="entry name" value="PrfC"/>
</dbReference>
<dbReference type="InterPro" id="IPR032090">
    <property type="entry name" value="RF3_C"/>
</dbReference>
<dbReference type="InterPro" id="IPR038467">
    <property type="entry name" value="RF3_dom_3_sf"/>
</dbReference>
<dbReference type="InterPro" id="IPR041732">
    <property type="entry name" value="RF3_GTP-bd"/>
</dbReference>
<dbReference type="InterPro" id="IPR005225">
    <property type="entry name" value="Small_GTP-bd"/>
</dbReference>
<dbReference type="InterPro" id="IPR000795">
    <property type="entry name" value="T_Tr_GTP-bd_dom"/>
</dbReference>
<dbReference type="InterPro" id="IPR009000">
    <property type="entry name" value="Transl_B-barrel_sf"/>
</dbReference>
<dbReference type="NCBIfam" id="TIGR00503">
    <property type="entry name" value="prfC"/>
    <property type="match status" value="1"/>
</dbReference>
<dbReference type="NCBIfam" id="NF001964">
    <property type="entry name" value="PRK00741.1"/>
    <property type="match status" value="1"/>
</dbReference>
<dbReference type="NCBIfam" id="TIGR00231">
    <property type="entry name" value="small_GTP"/>
    <property type="match status" value="1"/>
</dbReference>
<dbReference type="PANTHER" id="PTHR43556">
    <property type="entry name" value="PEPTIDE CHAIN RELEASE FACTOR RF3"/>
    <property type="match status" value="1"/>
</dbReference>
<dbReference type="PANTHER" id="PTHR43556:SF2">
    <property type="entry name" value="PEPTIDE CHAIN RELEASE FACTOR RF3"/>
    <property type="match status" value="1"/>
</dbReference>
<dbReference type="Pfam" id="PF22042">
    <property type="entry name" value="EF-G_D2"/>
    <property type="match status" value="1"/>
</dbReference>
<dbReference type="Pfam" id="PF00009">
    <property type="entry name" value="GTP_EFTU"/>
    <property type="match status" value="1"/>
</dbReference>
<dbReference type="Pfam" id="PF16658">
    <property type="entry name" value="RF3_C"/>
    <property type="match status" value="1"/>
</dbReference>
<dbReference type="PRINTS" id="PR00315">
    <property type="entry name" value="ELONGATNFCT"/>
</dbReference>
<dbReference type="SUPFAM" id="SSF54980">
    <property type="entry name" value="EF-G C-terminal domain-like"/>
    <property type="match status" value="1"/>
</dbReference>
<dbReference type="SUPFAM" id="SSF52540">
    <property type="entry name" value="P-loop containing nucleoside triphosphate hydrolases"/>
    <property type="match status" value="1"/>
</dbReference>
<dbReference type="SUPFAM" id="SSF50447">
    <property type="entry name" value="Translation proteins"/>
    <property type="match status" value="1"/>
</dbReference>
<dbReference type="PROSITE" id="PS00301">
    <property type="entry name" value="G_TR_1"/>
    <property type="match status" value="1"/>
</dbReference>
<dbReference type="PROSITE" id="PS51722">
    <property type="entry name" value="G_TR_2"/>
    <property type="match status" value="1"/>
</dbReference>
<gene>
    <name type="primary">prfC</name>
    <name type="ordered locus">BU543</name>
</gene>
<reference key="1">
    <citation type="journal article" date="2000" name="Nature">
        <title>Genome sequence of the endocellular bacterial symbiont of aphids Buchnera sp. APS.</title>
        <authorList>
            <person name="Shigenobu S."/>
            <person name="Watanabe H."/>
            <person name="Hattori M."/>
            <person name="Sakaki Y."/>
            <person name="Ishikawa H."/>
        </authorList>
    </citation>
    <scope>NUCLEOTIDE SEQUENCE [LARGE SCALE GENOMIC DNA]</scope>
    <source>
        <strain>APS</strain>
    </source>
</reference>
<feature type="chain" id="PRO_0000210933" description="Peptide chain release factor 3">
    <location>
        <begin position="1"/>
        <end position="526"/>
    </location>
</feature>
<feature type="domain" description="tr-type G">
    <location>
        <begin position="11"/>
        <end position="277"/>
    </location>
</feature>
<feature type="binding site" evidence="1">
    <location>
        <begin position="20"/>
        <end position="27"/>
    </location>
    <ligand>
        <name>GTP</name>
        <dbReference type="ChEBI" id="CHEBI:37565"/>
    </ligand>
</feature>
<feature type="binding site" evidence="1">
    <location>
        <begin position="88"/>
        <end position="92"/>
    </location>
    <ligand>
        <name>GTP</name>
        <dbReference type="ChEBI" id="CHEBI:37565"/>
    </ligand>
</feature>
<feature type="binding site" evidence="1">
    <location>
        <begin position="142"/>
        <end position="145"/>
    </location>
    <ligand>
        <name>GTP</name>
        <dbReference type="ChEBI" id="CHEBI:37565"/>
    </ligand>
</feature>
<accession>P57608</accession>
<proteinExistence type="inferred from homology"/>
<comment type="function">
    <text evidence="1">Increases the formation of ribosomal termination complexes and stimulates activities of RF-1 and RF-2. It binds guanine nucleotides and has strong preference for UGA stop codons. It may interact directly with the ribosome. The stimulation of RF-1 and RF-2 is significantly reduced by GTP and GDP, but not by GMP (By similarity).</text>
</comment>
<comment type="subcellular location">
    <subcellularLocation>
        <location evidence="1">Cytoplasm</location>
    </subcellularLocation>
</comment>
<comment type="similarity">
    <text evidence="2">Belongs to the TRAFAC class translation factor GTPase superfamily. Classic translation factor GTPase family. PrfC subfamily.</text>
</comment>
<sequence length="526" mass="60359">MFDSNHEQELSKRRTFAIISHPDAGKTTITEKMLFFGKVIRVPGTIKGRGSGKYAKSDWMNIEKERGISITTSVMQFTYKNILMNLLDTPGHQDFSEDTYRILTAVDCCLVVIDAAKGIEERTRKLMDVARIHNTPIITFINKLDRDSRDPIEILDEIEKELKLHCIPISWPISCGKNFRGVYHIYDKIIHLYKSKFRKNFLTLDSFLDGSLNEYLGADLSIHIRQELELIMNVYSKFNKEKFLKGITTPIFFGSALGNFGIDHLLDSLIKWAPSPLYRQSNKRIIKPQERKFTGFIFKIQANMDLKHRDRIAFMRIVSGQYTKGMKLTHVRIKKNIIISDAFSFLAGERISINKAYPGDVIGLHNHGTIKIGDTFTQGEEIKFIGIPSFAPEIFRLIYLKNPLKQKQLKKGLVQLSEEGTVQVFRPILNNDLILGAIGILQFDVVIERLRIEYNIDAVYKKVNIVLARWINYGNHHSLYNLKKSYSSYLAYDISNSLIYLAPSSANLNIVMSQNSDISFNATREQ</sequence>